<accession>Q320Y0</accession>
<evidence type="ECO:0000255" key="1">
    <source>
        <dbReference type="HAMAP-Rule" id="MF_00540"/>
    </source>
</evidence>
<comment type="function">
    <text evidence="1">Catalyzes the hydrolytic deamination of adenosine and 2-deoxyadenosine.</text>
</comment>
<comment type="catalytic activity">
    <reaction evidence="1">
        <text>adenosine + H2O + H(+) = inosine + NH4(+)</text>
        <dbReference type="Rhea" id="RHEA:24408"/>
        <dbReference type="ChEBI" id="CHEBI:15377"/>
        <dbReference type="ChEBI" id="CHEBI:15378"/>
        <dbReference type="ChEBI" id="CHEBI:16335"/>
        <dbReference type="ChEBI" id="CHEBI:17596"/>
        <dbReference type="ChEBI" id="CHEBI:28938"/>
        <dbReference type="EC" id="3.5.4.4"/>
    </reaction>
    <physiologicalReaction direction="left-to-right" evidence="1">
        <dbReference type="Rhea" id="RHEA:24409"/>
    </physiologicalReaction>
</comment>
<comment type="catalytic activity">
    <reaction evidence="1">
        <text>2'-deoxyadenosine + H2O + H(+) = 2'-deoxyinosine + NH4(+)</text>
        <dbReference type="Rhea" id="RHEA:28190"/>
        <dbReference type="ChEBI" id="CHEBI:15377"/>
        <dbReference type="ChEBI" id="CHEBI:15378"/>
        <dbReference type="ChEBI" id="CHEBI:17256"/>
        <dbReference type="ChEBI" id="CHEBI:28938"/>
        <dbReference type="ChEBI" id="CHEBI:28997"/>
        <dbReference type="EC" id="3.5.4.4"/>
    </reaction>
    <physiologicalReaction direction="left-to-right" evidence="1">
        <dbReference type="Rhea" id="RHEA:28191"/>
    </physiologicalReaction>
</comment>
<comment type="cofactor">
    <cofactor evidence="1">
        <name>Zn(2+)</name>
        <dbReference type="ChEBI" id="CHEBI:29105"/>
    </cofactor>
    <text evidence="1">Binds 1 zinc ion per subunit.</text>
</comment>
<comment type="similarity">
    <text evidence="1">Belongs to the metallo-dependent hydrolases superfamily. Adenosine and AMP deaminases family. Adenosine deaminase subfamily.</text>
</comment>
<gene>
    <name evidence="1" type="primary">add</name>
    <name type="ordered locus">SBO_1511</name>
</gene>
<proteinExistence type="inferred from homology"/>
<name>ADD_SHIBS</name>
<feature type="chain" id="PRO_1000017704" description="Adenosine deaminase">
    <location>
        <begin position="1"/>
        <end position="333"/>
    </location>
</feature>
<feature type="active site" description="Proton donor" evidence="1">
    <location>
        <position position="200"/>
    </location>
</feature>
<feature type="binding site" evidence="1">
    <location>
        <position position="12"/>
    </location>
    <ligand>
        <name>Zn(2+)</name>
        <dbReference type="ChEBI" id="CHEBI:29105"/>
        <note>catalytic</note>
    </ligand>
</feature>
<feature type="binding site" evidence="1">
    <location>
        <position position="14"/>
    </location>
    <ligand>
        <name>substrate</name>
    </ligand>
</feature>
<feature type="binding site" evidence="1">
    <location>
        <position position="14"/>
    </location>
    <ligand>
        <name>Zn(2+)</name>
        <dbReference type="ChEBI" id="CHEBI:29105"/>
        <note>catalytic</note>
    </ligand>
</feature>
<feature type="binding site" evidence="1">
    <location>
        <position position="16"/>
    </location>
    <ligand>
        <name>substrate</name>
    </ligand>
</feature>
<feature type="binding site" evidence="1">
    <location>
        <position position="170"/>
    </location>
    <ligand>
        <name>substrate</name>
    </ligand>
</feature>
<feature type="binding site" evidence="1">
    <location>
        <position position="197"/>
    </location>
    <ligand>
        <name>Zn(2+)</name>
        <dbReference type="ChEBI" id="CHEBI:29105"/>
        <note>catalytic</note>
    </ligand>
</feature>
<feature type="binding site" evidence="1">
    <location>
        <position position="278"/>
    </location>
    <ligand>
        <name>Zn(2+)</name>
        <dbReference type="ChEBI" id="CHEBI:29105"/>
        <note>catalytic</note>
    </ligand>
</feature>
<feature type="binding site" evidence="1">
    <location>
        <position position="279"/>
    </location>
    <ligand>
        <name>substrate</name>
    </ligand>
</feature>
<feature type="site" description="Important for catalytic activity" evidence="1">
    <location>
        <position position="221"/>
    </location>
</feature>
<reference key="1">
    <citation type="journal article" date="2005" name="Nucleic Acids Res.">
        <title>Genome dynamics and diversity of Shigella species, the etiologic agents of bacillary dysentery.</title>
        <authorList>
            <person name="Yang F."/>
            <person name="Yang J."/>
            <person name="Zhang X."/>
            <person name="Chen L."/>
            <person name="Jiang Y."/>
            <person name="Yan Y."/>
            <person name="Tang X."/>
            <person name="Wang J."/>
            <person name="Xiong Z."/>
            <person name="Dong J."/>
            <person name="Xue Y."/>
            <person name="Zhu Y."/>
            <person name="Xu X."/>
            <person name="Sun L."/>
            <person name="Chen S."/>
            <person name="Nie H."/>
            <person name="Peng J."/>
            <person name="Xu J."/>
            <person name="Wang Y."/>
            <person name="Yuan Z."/>
            <person name="Wen Y."/>
            <person name="Yao Z."/>
            <person name="Shen Y."/>
            <person name="Qiang B."/>
            <person name="Hou Y."/>
            <person name="Yu J."/>
            <person name="Jin Q."/>
        </authorList>
    </citation>
    <scope>NUCLEOTIDE SEQUENCE [LARGE SCALE GENOMIC DNA]</scope>
    <source>
        <strain>Sb227</strain>
    </source>
</reference>
<protein>
    <recommendedName>
        <fullName evidence="1">Adenosine deaminase</fullName>
        <ecNumber evidence="1">3.5.4.4</ecNumber>
    </recommendedName>
    <alternativeName>
        <fullName evidence="1">Adenosine aminohydrolase</fullName>
    </alternativeName>
</protein>
<organism>
    <name type="scientific">Shigella boydii serotype 4 (strain Sb227)</name>
    <dbReference type="NCBI Taxonomy" id="300268"/>
    <lineage>
        <taxon>Bacteria</taxon>
        <taxon>Pseudomonadati</taxon>
        <taxon>Pseudomonadota</taxon>
        <taxon>Gammaproteobacteria</taxon>
        <taxon>Enterobacterales</taxon>
        <taxon>Enterobacteriaceae</taxon>
        <taxon>Shigella</taxon>
    </lineage>
</organism>
<keyword id="KW-0378">Hydrolase</keyword>
<keyword id="KW-0479">Metal-binding</keyword>
<keyword id="KW-0546">Nucleotide metabolism</keyword>
<keyword id="KW-0862">Zinc</keyword>
<dbReference type="EC" id="3.5.4.4" evidence="1"/>
<dbReference type="EMBL" id="CP000036">
    <property type="protein sequence ID" value="ABB66128.1"/>
    <property type="molecule type" value="Genomic_DNA"/>
</dbReference>
<dbReference type="RefSeq" id="WP_000567500.1">
    <property type="nucleotide sequence ID" value="NC_007613.1"/>
</dbReference>
<dbReference type="SMR" id="Q320Y0"/>
<dbReference type="KEGG" id="sbo:SBO_1511"/>
<dbReference type="HOGENOM" id="CLU_039228_0_2_6"/>
<dbReference type="Proteomes" id="UP000007067">
    <property type="component" value="Chromosome"/>
</dbReference>
<dbReference type="GO" id="GO:0005829">
    <property type="term" value="C:cytosol"/>
    <property type="evidence" value="ECO:0007669"/>
    <property type="project" value="TreeGrafter"/>
</dbReference>
<dbReference type="GO" id="GO:0046936">
    <property type="term" value="F:2'-deoxyadenosine deaminase activity"/>
    <property type="evidence" value="ECO:0007669"/>
    <property type="project" value="RHEA"/>
</dbReference>
<dbReference type="GO" id="GO:0004000">
    <property type="term" value="F:adenosine deaminase activity"/>
    <property type="evidence" value="ECO:0007669"/>
    <property type="project" value="UniProtKB-UniRule"/>
</dbReference>
<dbReference type="GO" id="GO:0008270">
    <property type="term" value="F:zinc ion binding"/>
    <property type="evidence" value="ECO:0007669"/>
    <property type="project" value="UniProtKB-UniRule"/>
</dbReference>
<dbReference type="GO" id="GO:0006154">
    <property type="term" value="P:adenosine catabolic process"/>
    <property type="evidence" value="ECO:0007669"/>
    <property type="project" value="TreeGrafter"/>
</dbReference>
<dbReference type="GO" id="GO:0043103">
    <property type="term" value="P:hypoxanthine salvage"/>
    <property type="evidence" value="ECO:0007669"/>
    <property type="project" value="TreeGrafter"/>
</dbReference>
<dbReference type="GO" id="GO:0046103">
    <property type="term" value="P:inosine biosynthetic process"/>
    <property type="evidence" value="ECO:0007669"/>
    <property type="project" value="TreeGrafter"/>
</dbReference>
<dbReference type="GO" id="GO:0009117">
    <property type="term" value="P:nucleotide metabolic process"/>
    <property type="evidence" value="ECO:0007669"/>
    <property type="project" value="UniProtKB-KW"/>
</dbReference>
<dbReference type="GO" id="GO:0009168">
    <property type="term" value="P:purine ribonucleoside monophosphate biosynthetic process"/>
    <property type="evidence" value="ECO:0007669"/>
    <property type="project" value="UniProtKB-UniRule"/>
</dbReference>
<dbReference type="CDD" id="cd01320">
    <property type="entry name" value="ADA"/>
    <property type="match status" value="1"/>
</dbReference>
<dbReference type="FunFam" id="3.20.20.140:FF:000009">
    <property type="entry name" value="Adenosine deaminase"/>
    <property type="match status" value="1"/>
</dbReference>
<dbReference type="Gene3D" id="3.20.20.140">
    <property type="entry name" value="Metal-dependent hydrolases"/>
    <property type="match status" value="1"/>
</dbReference>
<dbReference type="HAMAP" id="MF_00540">
    <property type="entry name" value="A_deaminase"/>
    <property type="match status" value="1"/>
</dbReference>
<dbReference type="InterPro" id="IPR028893">
    <property type="entry name" value="A_deaminase"/>
</dbReference>
<dbReference type="InterPro" id="IPR001365">
    <property type="entry name" value="A_deaminase_dom"/>
</dbReference>
<dbReference type="InterPro" id="IPR006330">
    <property type="entry name" value="Ado/ade_deaminase"/>
</dbReference>
<dbReference type="InterPro" id="IPR032466">
    <property type="entry name" value="Metal_Hydrolase"/>
</dbReference>
<dbReference type="NCBIfam" id="TIGR01430">
    <property type="entry name" value="aden_deam"/>
    <property type="match status" value="1"/>
</dbReference>
<dbReference type="NCBIfam" id="NF006846">
    <property type="entry name" value="PRK09358.1-1"/>
    <property type="match status" value="1"/>
</dbReference>
<dbReference type="PANTHER" id="PTHR11409">
    <property type="entry name" value="ADENOSINE DEAMINASE"/>
    <property type="match status" value="1"/>
</dbReference>
<dbReference type="PANTHER" id="PTHR11409:SF43">
    <property type="entry name" value="ADENOSINE DEAMINASE"/>
    <property type="match status" value="1"/>
</dbReference>
<dbReference type="Pfam" id="PF00962">
    <property type="entry name" value="A_deaminase"/>
    <property type="match status" value="1"/>
</dbReference>
<dbReference type="SUPFAM" id="SSF51556">
    <property type="entry name" value="Metallo-dependent hydrolases"/>
    <property type="match status" value="1"/>
</dbReference>
<sequence length="333" mass="36301">MIDTTLPLTDIHRHLDGNIRPQTILELGRQYNISLPAQSLETLIPHVQVIANEPDLVSFLTKLDWGVKVLASLDACRRVAFENIEDAARNGLHYVELRFSPGYMAMAHKLPVAGVVEAVIDGVREGCRTFGVQAKLIGIMSRTFGEAACQQELEAFLAHRDQITALDLAGDELGFPGSLFLSHFNLARDAGWHITVHAGEAAGPESIWQAIRELGAERIGHGVKAIEDRALMDFLAEQQIGIESCLTSNIQTSTVAELAAHPLKTFLEHGIRAGINTDDPGVQGVDIIHEYTVAAPAAGLSREQIRQAQINGLEMAFLSAEEKRALREKVAAK</sequence>